<name>CBHE_COXBU</name>
<sequence length="341" mass="39501">MRLEQPRNSLKRSTLDLIERVNRDEYPSLPQDSKCKDALVSAFRKTANFKKYNRPDVNSREQLISPSLTEEDLLGRIRQRYKEKIFAGGQEKFADQSFIAEQIASTYEDFKDNPTLPAYCGEMTYLLYYHLREEGIKPENMLVVGFSANAEDHVLLMYSSDEGFLEQIKNDYFEQEEEGEEAESYKNFIELCARRDKNQTLLLLDPWSQDNKILDLNQLDRDESTNEVIEDYFKNKREALEEGFQPHAIIDGVLEESRVSKATGSVINMETLSFQVDAFKPEELMEIDEENTSDSSEEGTSKNRFRDTLFSNVPDSSSDSENEQEREKKELAGKTPSFRLC</sequence>
<dbReference type="EMBL" id="M58166">
    <property type="protein sequence ID" value="AAA23306.1"/>
    <property type="molecule type" value="Genomic_DNA"/>
</dbReference>
<dbReference type="EMBL" id="AE016829">
    <property type="protein sequence ID" value="AAO91593.1"/>
    <property type="molecule type" value="Genomic_DNA"/>
</dbReference>
<dbReference type="PIR" id="JQ1189">
    <property type="entry name" value="JQ1189"/>
</dbReference>
<dbReference type="RefSeq" id="NP_819033.1">
    <property type="nucleotide sequence ID" value="NC_004704.2"/>
</dbReference>
<dbReference type="RefSeq" id="WP_011109641.1">
    <property type="nucleotide sequence ID" value="NC_004704.2"/>
</dbReference>
<dbReference type="EnsemblBacteria" id="AAO91593">
    <property type="protein sequence ID" value="AAO91593"/>
    <property type="gene ID" value="CBUA0016"/>
</dbReference>
<dbReference type="GeneID" id="1207846"/>
<dbReference type="KEGG" id="cbu:CBUA0016"/>
<dbReference type="PATRIC" id="fig|227377.7.peg.2107"/>
<dbReference type="eggNOG" id="ENOG502ZIQN">
    <property type="taxonomic scope" value="Bacteria"/>
</dbReference>
<dbReference type="HOGENOM" id="CLU_815632_0_0_6"/>
<dbReference type="Proteomes" id="UP000002671">
    <property type="component" value="Plasmid pQpH1"/>
</dbReference>
<dbReference type="GO" id="GO:0005737">
    <property type="term" value="C:cytoplasm"/>
    <property type="evidence" value="ECO:0007669"/>
    <property type="project" value="UniProtKB-SubCell"/>
</dbReference>
<feature type="chain" id="PRO_0000089372" description="Protein CbhE">
    <location>
        <begin position="1"/>
        <end position="341"/>
    </location>
</feature>
<feature type="region of interest" description="Disordered" evidence="1">
    <location>
        <begin position="287"/>
        <end position="341"/>
    </location>
</feature>
<feature type="compositionally biased region" description="Acidic residues" evidence="1">
    <location>
        <begin position="287"/>
        <end position="297"/>
    </location>
</feature>
<feature type="compositionally biased region" description="Basic and acidic residues" evidence="1">
    <location>
        <begin position="323"/>
        <end position="332"/>
    </location>
</feature>
<feature type="sequence conflict" description="In Ref. 1; AAA23306." evidence="2" ref="1">
    <original>E</original>
    <variation>A</variation>
    <location>
        <position position="176"/>
    </location>
</feature>
<organism>
    <name type="scientific">Coxiella burnetii (strain RSA 493 / Nine Mile phase I)</name>
    <dbReference type="NCBI Taxonomy" id="227377"/>
    <lineage>
        <taxon>Bacteria</taxon>
        <taxon>Pseudomonadati</taxon>
        <taxon>Pseudomonadota</taxon>
        <taxon>Gammaproteobacteria</taxon>
        <taxon>Legionellales</taxon>
        <taxon>Coxiellaceae</taxon>
        <taxon>Coxiella</taxon>
    </lineage>
</organism>
<accession>P26688</accession>
<reference key="1">
    <citation type="journal article" date="1991" name="Gene">
        <title>Analysis of the cbhE' plasmid gene from acute disease-causing isolates of Coxiella burnetii.</title>
        <authorList>
            <person name="Minnick M.F."/>
            <person name="Small C.L."/>
            <person name="Frazier M.E."/>
            <person name="Mallavia L.P."/>
        </authorList>
    </citation>
    <scope>NUCLEOTIDE SEQUENCE [GENOMIC DNA]</scope>
</reference>
<reference key="2">
    <citation type="journal article" date="2003" name="Proc. Natl. Acad. Sci. U.S.A.">
        <title>Complete genome sequence of the Q-fever pathogen, Coxiella burnetii.</title>
        <authorList>
            <person name="Seshadri R."/>
            <person name="Paulsen I.T."/>
            <person name="Eisen J.A."/>
            <person name="Read T.D."/>
            <person name="Nelson K.E."/>
            <person name="Nelson W.C."/>
            <person name="Ward N.L."/>
            <person name="Tettelin H."/>
            <person name="Davidsen T.M."/>
            <person name="Beanan M.J."/>
            <person name="DeBoy R.T."/>
            <person name="Daugherty S.C."/>
            <person name="Brinkac L.M."/>
            <person name="Madupu R."/>
            <person name="Dodson R.J."/>
            <person name="Khouri H.M."/>
            <person name="Lee K.H."/>
            <person name="Carty H.A."/>
            <person name="Scanlan D."/>
            <person name="Heinzen R.A."/>
            <person name="Thompson H.A."/>
            <person name="Samuel J.E."/>
            <person name="Fraser C.M."/>
            <person name="Heidelberg J.F."/>
        </authorList>
    </citation>
    <scope>NUCLEOTIDE SEQUENCE [LARGE SCALE GENOMIC DNA]</scope>
    <source>
        <strain>RSA 493 / Nine Mile phase I</strain>
    </source>
</reference>
<comment type="function">
    <text>May be involved in the pathogenesis of acute Q fever.</text>
</comment>
<comment type="subcellular location">
    <subcellularLocation>
        <location evidence="2">Cytoplasm</location>
    </subcellularLocation>
</comment>
<proteinExistence type="predicted"/>
<keyword id="KW-0963">Cytoplasm</keyword>
<keyword id="KW-0614">Plasmid</keyword>
<keyword id="KW-1185">Reference proteome</keyword>
<evidence type="ECO:0000256" key="1">
    <source>
        <dbReference type="SAM" id="MobiDB-lite"/>
    </source>
</evidence>
<evidence type="ECO:0000305" key="2"/>
<protein>
    <recommendedName>
        <fullName>Protein CbhE</fullName>
    </recommendedName>
</protein>
<geneLocation type="plasmid">
    <name>pQpH1</name>
</geneLocation>
<gene>
    <name type="primary">cbhE</name>
    <name type="ordered locus">CBUA0016</name>
</gene>